<accession>C1AYX6</accession>
<proteinExistence type="inferred from homology"/>
<reference key="1">
    <citation type="submission" date="2009-03" db="EMBL/GenBank/DDBJ databases">
        <title>Comparison of the complete genome sequences of Rhodococcus erythropolis PR4 and Rhodococcus opacus B4.</title>
        <authorList>
            <person name="Takarada H."/>
            <person name="Sekine M."/>
            <person name="Hosoyama A."/>
            <person name="Yamada R."/>
            <person name="Fujisawa T."/>
            <person name="Omata S."/>
            <person name="Shimizu A."/>
            <person name="Tsukatani N."/>
            <person name="Tanikawa S."/>
            <person name="Fujita N."/>
            <person name="Harayama S."/>
        </authorList>
    </citation>
    <scope>NUCLEOTIDE SEQUENCE [LARGE SCALE GENOMIC DNA]</scope>
    <source>
        <strain>B4</strain>
    </source>
</reference>
<comment type="function">
    <text evidence="1">Forms part of the ribosomal stalk which helps the ribosome interact with GTP-bound translation factors.</text>
</comment>
<comment type="subunit">
    <text evidence="1">Part of the ribosomal stalk of the 50S ribosomal subunit. Interacts with L10 and the large rRNA to form the base of the stalk. L10 forms an elongated spine to which L12 dimers bind in a sequential fashion forming a multimeric L10(L12)X complex.</text>
</comment>
<comment type="PTM">
    <text evidence="1">One or more lysine residues are methylated.</text>
</comment>
<comment type="similarity">
    <text evidence="1">Belongs to the universal ribosomal protein uL11 family.</text>
</comment>
<organism>
    <name type="scientific">Rhodococcus opacus (strain B4)</name>
    <dbReference type="NCBI Taxonomy" id="632772"/>
    <lineage>
        <taxon>Bacteria</taxon>
        <taxon>Bacillati</taxon>
        <taxon>Actinomycetota</taxon>
        <taxon>Actinomycetes</taxon>
        <taxon>Mycobacteriales</taxon>
        <taxon>Nocardiaceae</taxon>
        <taxon>Rhodococcus</taxon>
    </lineage>
</organism>
<dbReference type="EMBL" id="AP011115">
    <property type="protein sequence ID" value="BAH49904.1"/>
    <property type="molecule type" value="Genomic_DNA"/>
</dbReference>
<dbReference type="RefSeq" id="WP_005252095.1">
    <property type="nucleotide sequence ID" value="NC_012522.1"/>
</dbReference>
<dbReference type="SMR" id="C1AYX6"/>
<dbReference type="STRING" id="632772.ROP_16570"/>
<dbReference type="GeneID" id="69893672"/>
<dbReference type="KEGG" id="rop:ROP_16570"/>
<dbReference type="PATRIC" id="fig|632772.20.peg.1738"/>
<dbReference type="HOGENOM" id="CLU_074237_2_0_11"/>
<dbReference type="OrthoDB" id="9802408at2"/>
<dbReference type="Proteomes" id="UP000002212">
    <property type="component" value="Chromosome"/>
</dbReference>
<dbReference type="GO" id="GO:0022625">
    <property type="term" value="C:cytosolic large ribosomal subunit"/>
    <property type="evidence" value="ECO:0007669"/>
    <property type="project" value="TreeGrafter"/>
</dbReference>
<dbReference type="GO" id="GO:0070180">
    <property type="term" value="F:large ribosomal subunit rRNA binding"/>
    <property type="evidence" value="ECO:0007669"/>
    <property type="project" value="UniProtKB-UniRule"/>
</dbReference>
<dbReference type="GO" id="GO:0003735">
    <property type="term" value="F:structural constituent of ribosome"/>
    <property type="evidence" value="ECO:0007669"/>
    <property type="project" value="InterPro"/>
</dbReference>
<dbReference type="GO" id="GO:0006412">
    <property type="term" value="P:translation"/>
    <property type="evidence" value="ECO:0007669"/>
    <property type="project" value="UniProtKB-UniRule"/>
</dbReference>
<dbReference type="CDD" id="cd00349">
    <property type="entry name" value="Ribosomal_L11"/>
    <property type="match status" value="1"/>
</dbReference>
<dbReference type="FunFam" id="1.10.10.250:FF:000001">
    <property type="entry name" value="50S ribosomal protein L11"/>
    <property type="match status" value="1"/>
</dbReference>
<dbReference type="FunFam" id="3.30.1550.10:FF:000001">
    <property type="entry name" value="50S ribosomal protein L11"/>
    <property type="match status" value="1"/>
</dbReference>
<dbReference type="Gene3D" id="1.10.10.250">
    <property type="entry name" value="Ribosomal protein L11, C-terminal domain"/>
    <property type="match status" value="1"/>
</dbReference>
<dbReference type="Gene3D" id="3.30.1550.10">
    <property type="entry name" value="Ribosomal protein L11/L12, N-terminal domain"/>
    <property type="match status" value="1"/>
</dbReference>
<dbReference type="HAMAP" id="MF_00736">
    <property type="entry name" value="Ribosomal_uL11"/>
    <property type="match status" value="1"/>
</dbReference>
<dbReference type="InterPro" id="IPR000911">
    <property type="entry name" value="Ribosomal_uL11"/>
</dbReference>
<dbReference type="InterPro" id="IPR006519">
    <property type="entry name" value="Ribosomal_uL11_bac-typ"/>
</dbReference>
<dbReference type="InterPro" id="IPR020783">
    <property type="entry name" value="Ribosomal_uL11_C"/>
</dbReference>
<dbReference type="InterPro" id="IPR036769">
    <property type="entry name" value="Ribosomal_uL11_C_sf"/>
</dbReference>
<dbReference type="InterPro" id="IPR020785">
    <property type="entry name" value="Ribosomal_uL11_CS"/>
</dbReference>
<dbReference type="InterPro" id="IPR020784">
    <property type="entry name" value="Ribosomal_uL11_N"/>
</dbReference>
<dbReference type="InterPro" id="IPR036796">
    <property type="entry name" value="Ribosomal_uL11_N_sf"/>
</dbReference>
<dbReference type="NCBIfam" id="TIGR01632">
    <property type="entry name" value="L11_bact"/>
    <property type="match status" value="1"/>
</dbReference>
<dbReference type="PANTHER" id="PTHR11661">
    <property type="entry name" value="60S RIBOSOMAL PROTEIN L12"/>
    <property type="match status" value="1"/>
</dbReference>
<dbReference type="PANTHER" id="PTHR11661:SF1">
    <property type="entry name" value="LARGE RIBOSOMAL SUBUNIT PROTEIN UL11M"/>
    <property type="match status" value="1"/>
</dbReference>
<dbReference type="Pfam" id="PF00298">
    <property type="entry name" value="Ribosomal_L11"/>
    <property type="match status" value="1"/>
</dbReference>
<dbReference type="Pfam" id="PF03946">
    <property type="entry name" value="Ribosomal_L11_N"/>
    <property type="match status" value="1"/>
</dbReference>
<dbReference type="SMART" id="SM00649">
    <property type="entry name" value="RL11"/>
    <property type="match status" value="1"/>
</dbReference>
<dbReference type="SUPFAM" id="SSF54747">
    <property type="entry name" value="Ribosomal L11/L12e N-terminal domain"/>
    <property type="match status" value="1"/>
</dbReference>
<dbReference type="SUPFAM" id="SSF46906">
    <property type="entry name" value="Ribosomal protein L11, C-terminal domain"/>
    <property type="match status" value="1"/>
</dbReference>
<dbReference type="PROSITE" id="PS00359">
    <property type="entry name" value="RIBOSOMAL_L11"/>
    <property type="match status" value="1"/>
</dbReference>
<feature type="chain" id="PRO_1000195701" description="Large ribosomal subunit protein uL11">
    <location>
        <begin position="1"/>
        <end position="144"/>
    </location>
</feature>
<protein>
    <recommendedName>
        <fullName evidence="1">Large ribosomal subunit protein uL11</fullName>
    </recommendedName>
    <alternativeName>
        <fullName evidence="2">50S ribosomal protein L11</fullName>
    </alternativeName>
</protein>
<keyword id="KW-0488">Methylation</keyword>
<keyword id="KW-0687">Ribonucleoprotein</keyword>
<keyword id="KW-0689">Ribosomal protein</keyword>
<keyword id="KW-0694">RNA-binding</keyword>
<keyword id="KW-0699">rRNA-binding</keyword>
<name>RL11_RHOOB</name>
<sequence>MPPKKKKLAGLIKLQIQAGQANPAPPVGPALGQHGVNIMEFCKAYNAATESQRGNVVPVEISVYEDRTFDFKLKTPPAAKLLLKAAGVQKGSGEPHKTKVASVTMDQVREIAKTKQEDLNANDIEQAAKIIAGTARSMGITVDG</sequence>
<evidence type="ECO:0000255" key="1">
    <source>
        <dbReference type="HAMAP-Rule" id="MF_00736"/>
    </source>
</evidence>
<evidence type="ECO:0000305" key="2"/>
<gene>
    <name evidence="1" type="primary">rplK</name>
    <name type="ordered locus">ROP_16570</name>
</gene>